<feature type="chain" id="PRO_0000251368" description="Large ribosomal subunit protein uL18">
    <location>
        <begin position="1"/>
        <end position="117"/>
    </location>
</feature>
<organism>
    <name type="scientific">Shigella dysenteriae serotype 1 (strain Sd197)</name>
    <dbReference type="NCBI Taxonomy" id="300267"/>
    <lineage>
        <taxon>Bacteria</taxon>
        <taxon>Pseudomonadati</taxon>
        <taxon>Pseudomonadota</taxon>
        <taxon>Gammaproteobacteria</taxon>
        <taxon>Enterobacterales</taxon>
        <taxon>Enterobacteriaceae</taxon>
        <taxon>Shigella</taxon>
    </lineage>
</organism>
<sequence length="117" mass="12770">MDKKSARIRRATRARRKLQELGATRLVVHRTPRHIYAQVIAPNGSEVLVAASTVEKAIAEQLKYTGNKDAAAAVGKAVAERALEKGIKDVSFDRSGFQYHGRVQALADAAREAGLQF</sequence>
<evidence type="ECO:0000255" key="1">
    <source>
        <dbReference type="HAMAP-Rule" id="MF_01337"/>
    </source>
</evidence>
<evidence type="ECO:0000305" key="2"/>
<dbReference type="EMBL" id="CP000034">
    <property type="protein sequence ID" value="ABB63458.1"/>
    <property type="molecule type" value="Genomic_DNA"/>
</dbReference>
<dbReference type="RefSeq" id="WP_000358960.1">
    <property type="nucleotide sequence ID" value="NC_007606.1"/>
</dbReference>
<dbReference type="RefSeq" id="YP_404949.1">
    <property type="nucleotide sequence ID" value="NC_007606.1"/>
</dbReference>
<dbReference type="SMR" id="Q32B47"/>
<dbReference type="STRING" id="300267.SDY_3480"/>
<dbReference type="EnsemblBacteria" id="ABB63458">
    <property type="protein sequence ID" value="ABB63458"/>
    <property type="gene ID" value="SDY_3480"/>
</dbReference>
<dbReference type="GeneID" id="98390426"/>
<dbReference type="KEGG" id="sdy:SDY_3480"/>
<dbReference type="PATRIC" id="fig|300267.13.peg.4133"/>
<dbReference type="HOGENOM" id="CLU_098841_0_1_6"/>
<dbReference type="Proteomes" id="UP000002716">
    <property type="component" value="Chromosome"/>
</dbReference>
<dbReference type="GO" id="GO:0022625">
    <property type="term" value="C:cytosolic large ribosomal subunit"/>
    <property type="evidence" value="ECO:0007669"/>
    <property type="project" value="TreeGrafter"/>
</dbReference>
<dbReference type="GO" id="GO:0008097">
    <property type="term" value="F:5S rRNA binding"/>
    <property type="evidence" value="ECO:0007669"/>
    <property type="project" value="TreeGrafter"/>
</dbReference>
<dbReference type="GO" id="GO:0003735">
    <property type="term" value="F:structural constituent of ribosome"/>
    <property type="evidence" value="ECO:0007669"/>
    <property type="project" value="InterPro"/>
</dbReference>
<dbReference type="GO" id="GO:0006412">
    <property type="term" value="P:translation"/>
    <property type="evidence" value="ECO:0007669"/>
    <property type="project" value="UniProtKB-UniRule"/>
</dbReference>
<dbReference type="CDD" id="cd00432">
    <property type="entry name" value="Ribosomal_L18_L5e"/>
    <property type="match status" value="1"/>
</dbReference>
<dbReference type="FunFam" id="3.30.420.100:FF:000001">
    <property type="entry name" value="50S ribosomal protein L18"/>
    <property type="match status" value="1"/>
</dbReference>
<dbReference type="Gene3D" id="3.30.420.100">
    <property type="match status" value="1"/>
</dbReference>
<dbReference type="HAMAP" id="MF_01337_B">
    <property type="entry name" value="Ribosomal_uL18_B"/>
    <property type="match status" value="1"/>
</dbReference>
<dbReference type="InterPro" id="IPR004389">
    <property type="entry name" value="Ribosomal_uL18_bac-type"/>
</dbReference>
<dbReference type="InterPro" id="IPR005484">
    <property type="entry name" value="Ribosomal_uL18_bac/euk"/>
</dbReference>
<dbReference type="NCBIfam" id="TIGR00060">
    <property type="entry name" value="L18_bact"/>
    <property type="match status" value="1"/>
</dbReference>
<dbReference type="PANTHER" id="PTHR12899">
    <property type="entry name" value="39S RIBOSOMAL PROTEIN L18, MITOCHONDRIAL"/>
    <property type="match status" value="1"/>
</dbReference>
<dbReference type="PANTHER" id="PTHR12899:SF3">
    <property type="entry name" value="LARGE RIBOSOMAL SUBUNIT PROTEIN UL18M"/>
    <property type="match status" value="1"/>
</dbReference>
<dbReference type="Pfam" id="PF00861">
    <property type="entry name" value="Ribosomal_L18p"/>
    <property type="match status" value="1"/>
</dbReference>
<dbReference type="SUPFAM" id="SSF53137">
    <property type="entry name" value="Translational machinery components"/>
    <property type="match status" value="1"/>
</dbReference>
<proteinExistence type="inferred from homology"/>
<accession>Q32B47</accession>
<name>RL18_SHIDS</name>
<keyword id="KW-1185">Reference proteome</keyword>
<keyword id="KW-0687">Ribonucleoprotein</keyword>
<keyword id="KW-0689">Ribosomal protein</keyword>
<keyword id="KW-0694">RNA-binding</keyword>
<keyword id="KW-0699">rRNA-binding</keyword>
<reference key="1">
    <citation type="journal article" date="2005" name="Nucleic Acids Res.">
        <title>Genome dynamics and diversity of Shigella species, the etiologic agents of bacillary dysentery.</title>
        <authorList>
            <person name="Yang F."/>
            <person name="Yang J."/>
            <person name="Zhang X."/>
            <person name="Chen L."/>
            <person name="Jiang Y."/>
            <person name="Yan Y."/>
            <person name="Tang X."/>
            <person name="Wang J."/>
            <person name="Xiong Z."/>
            <person name="Dong J."/>
            <person name="Xue Y."/>
            <person name="Zhu Y."/>
            <person name="Xu X."/>
            <person name="Sun L."/>
            <person name="Chen S."/>
            <person name="Nie H."/>
            <person name="Peng J."/>
            <person name="Xu J."/>
            <person name="Wang Y."/>
            <person name="Yuan Z."/>
            <person name="Wen Y."/>
            <person name="Yao Z."/>
            <person name="Shen Y."/>
            <person name="Qiang B."/>
            <person name="Hou Y."/>
            <person name="Yu J."/>
            <person name="Jin Q."/>
        </authorList>
    </citation>
    <scope>NUCLEOTIDE SEQUENCE [LARGE SCALE GENOMIC DNA]</scope>
    <source>
        <strain>Sd197</strain>
    </source>
</reference>
<protein>
    <recommendedName>
        <fullName evidence="1">Large ribosomal subunit protein uL18</fullName>
    </recommendedName>
    <alternativeName>
        <fullName evidence="2">50S ribosomal protein L18</fullName>
    </alternativeName>
</protein>
<comment type="function">
    <text evidence="1">This is one of the proteins that bind and probably mediate the attachment of the 5S RNA into the large ribosomal subunit, where it forms part of the central protuberance.</text>
</comment>
<comment type="subunit">
    <text evidence="1">Part of the 50S ribosomal subunit; part of the 5S rRNA/L5/L18/L25 subcomplex. Contacts the 5S and 23S rRNAs.</text>
</comment>
<comment type="similarity">
    <text evidence="1">Belongs to the universal ribosomal protein uL18 family.</text>
</comment>
<gene>
    <name evidence="1" type="primary">rplR</name>
    <name type="ordered locus">SDY_3480</name>
</gene>